<gene>
    <name type="primary">REC8</name>
    <name type="synonym">REC8L1</name>
</gene>
<name>REC8_HUMAN</name>
<accession>O95072</accession>
<accession>A8K576</accession>
<accession>D3DS62</accession>
<accession>Q658V5</accession>
<accession>Q6IA92</accession>
<accession>Q8WUV8</accession>
<accession>Q9BTF2</accession>
<accession>Q9NVQ9</accession>
<dbReference type="EMBL" id="AF006264">
    <property type="protein sequence ID" value="AAD01193.1"/>
    <property type="molecule type" value="mRNA"/>
</dbReference>
<dbReference type="EMBL" id="AK001435">
    <property type="protein sequence ID" value="BAA91690.1"/>
    <property type="molecule type" value="mRNA"/>
</dbReference>
<dbReference type="EMBL" id="AK291191">
    <property type="protein sequence ID" value="BAF83880.1"/>
    <property type="molecule type" value="mRNA"/>
</dbReference>
<dbReference type="EMBL" id="CR457263">
    <property type="protein sequence ID" value="CAG33544.1"/>
    <property type="molecule type" value="mRNA"/>
</dbReference>
<dbReference type="EMBL" id="AL832973">
    <property type="protein sequence ID" value="CAH56339.1"/>
    <property type="molecule type" value="mRNA"/>
</dbReference>
<dbReference type="EMBL" id="AL136295">
    <property type="status" value="NOT_ANNOTATED_CDS"/>
    <property type="molecule type" value="Genomic_DNA"/>
</dbReference>
<dbReference type="EMBL" id="CH471078">
    <property type="protein sequence ID" value="EAW66089.1"/>
    <property type="molecule type" value="Genomic_DNA"/>
</dbReference>
<dbReference type="EMBL" id="CH471078">
    <property type="protein sequence ID" value="EAW66090.1"/>
    <property type="molecule type" value="Genomic_DNA"/>
</dbReference>
<dbReference type="EMBL" id="BC004159">
    <property type="protein sequence ID" value="AAH04159.1"/>
    <property type="molecule type" value="mRNA"/>
</dbReference>
<dbReference type="EMBL" id="BC010887">
    <property type="protein sequence ID" value="AAH10887.1"/>
    <property type="molecule type" value="mRNA"/>
</dbReference>
<dbReference type="EMBL" id="BC019326">
    <property type="protein sequence ID" value="AAH19326.1"/>
    <property type="molecule type" value="mRNA"/>
</dbReference>
<dbReference type="CCDS" id="CCDS41932.1">
    <molecule id="O95072-1"/>
</dbReference>
<dbReference type="RefSeq" id="NP_001041670.1">
    <molecule id="O95072-1"/>
    <property type="nucleotide sequence ID" value="NM_001048205.2"/>
</dbReference>
<dbReference type="RefSeq" id="NP_005123.2">
    <molecule id="O95072-1"/>
    <property type="nucleotide sequence ID" value="NM_005132.3"/>
</dbReference>
<dbReference type="SMR" id="O95072"/>
<dbReference type="BioGRID" id="115306">
    <property type="interactions" value="45"/>
</dbReference>
<dbReference type="ComplexPortal" id="CPX-7442">
    <property type="entry name" value="Nuclear meiotic cohesin complex, REC8 variant"/>
</dbReference>
<dbReference type="FunCoup" id="O95072">
    <property type="interactions" value="812"/>
</dbReference>
<dbReference type="IntAct" id="O95072">
    <property type="interactions" value="39"/>
</dbReference>
<dbReference type="MINT" id="O95072"/>
<dbReference type="STRING" id="9606.ENSP00000482546"/>
<dbReference type="GlyGen" id="O95072">
    <property type="glycosylation" value="1 site, 1 O-linked glycan (1 site)"/>
</dbReference>
<dbReference type="iPTMnet" id="O95072"/>
<dbReference type="PhosphoSitePlus" id="O95072"/>
<dbReference type="BioMuta" id="REC8"/>
<dbReference type="MassIVE" id="O95072"/>
<dbReference type="PaxDb" id="9606-ENSP00000482546"/>
<dbReference type="PeptideAtlas" id="O95072"/>
<dbReference type="ProteomicsDB" id="50642">
    <molecule id="O95072-1"/>
</dbReference>
<dbReference type="ProteomicsDB" id="50643">
    <molecule id="O95072-2"/>
</dbReference>
<dbReference type="Antibodypedia" id="22688">
    <property type="antibodies" value="239 antibodies from 29 providers"/>
</dbReference>
<dbReference type="DNASU" id="9985"/>
<dbReference type="Ensembl" id="ENST00000611366.5">
    <molecule id="O95072-1"/>
    <property type="protein sequence ID" value="ENSP00000482439.1"/>
    <property type="gene ID" value="ENSG00000100918.14"/>
</dbReference>
<dbReference type="Ensembl" id="ENST00000620473.4">
    <molecule id="O95072-1"/>
    <property type="protein sequence ID" value="ENSP00000482546.1"/>
    <property type="gene ID" value="ENSG00000100918.14"/>
</dbReference>
<dbReference type="Ensembl" id="ENST00000642486.2">
    <molecule id="O95072-1"/>
    <property type="protein sequence ID" value="ENSP00000493523.1"/>
    <property type="gene ID" value="ENSG00000285007.2"/>
</dbReference>
<dbReference type="Ensembl" id="ENST00000646765.1">
    <molecule id="O95072-1"/>
    <property type="protein sequence ID" value="ENSP00000495458.1"/>
    <property type="gene ID" value="ENSG00000285007.2"/>
</dbReference>
<dbReference type="GeneID" id="9985"/>
<dbReference type="KEGG" id="hsa:9985"/>
<dbReference type="MANE-Select" id="ENST00000611366.5">
    <property type="protein sequence ID" value="ENSP00000482439.1"/>
    <property type="RefSeq nucleotide sequence ID" value="NM_001048205.2"/>
    <property type="RefSeq protein sequence ID" value="NP_001041670.1"/>
</dbReference>
<dbReference type="UCSC" id="uc032awb.2">
    <molecule id="O95072-1"/>
    <property type="organism name" value="human"/>
</dbReference>
<dbReference type="AGR" id="HGNC:16879"/>
<dbReference type="CTD" id="9985"/>
<dbReference type="DisGeNET" id="9985"/>
<dbReference type="GeneCards" id="REC8"/>
<dbReference type="HGNC" id="HGNC:16879">
    <property type="gene designation" value="REC8"/>
</dbReference>
<dbReference type="HPA" id="ENSG00000100918">
    <property type="expression patterns" value="Tissue enhanced (pituitary)"/>
</dbReference>
<dbReference type="MalaCards" id="REC8"/>
<dbReference type="MIM" id="608193">
    <property type="type" value="gene"/>
</dbReference>
<dbReference type="neXtProt" id="NX_O95072"/>
<dbReference type="OpenTargets" id="ENSG00000100918"/>
<dbReference type="PharmGKB" id="PA162401009"/>
<dbReference type="VEuPathDB" id="HostDB:ENSG00000100918"/>
<dbReference type="eggNOG" id="KOG1213">
    <property type="taxonomic scope" value="Eukaryota"/>
</dbReference>
<dbReference type="GeneTree" id="ENSGT00390000011379"/>
<dbReference type="HOGENOM" id="CLU_036680_0_0_1"/>
<dbReference type="InParanoid" id="O95072"/>
<dbReference type="OMA" id="RVYFQQC"/>
<dbReference type="OrthoDB" id="10071381at2759"/>
<dbReference type="PAN-GO" id="O95072">
    <property type="GO annotations" value="4 GO annotations based on evolutionary models"/>
</dbReference>
<dbReference type="PhylomeDB" id="O95072"/>
<dbReference type="TreeFam" id="TF338144"/>
<dbReference type="PathwayCommons" id="O95072"/>
<dbReference type="Reactome" id="R-HSA-1221632">
    <property type="pathway name" value="Meiotic synapsis"/>
</dbReference>
<dbReference type="SignaLink" id="O95072"/>
<dbReference type="BioGRID-ORCS" id="9985">
    <property type="hits" value="19 hits in 1150 CRISPR screens"/>
</dbReference>
<dbReference type="CD-CODE" id="8C2F96ED">
    <property type="entry name" value="Centrosome"/>
</dbReference>
<dbReference type="ChiTaRS" id="REC8">
    <property type="organism name" value="human"/>
</dbReference>
<dbReference type="GeneWiki" id="REC8"/>
<dbReference type="GenomeRNAi" id="9985"/>
<dbReference type="Pharos" id="O95072">
    <property type="development level" value="Tbio"/>
</dbReference>
<dbReference type="PRO" id="PR:O95072"/>
<dbReference type="Proteomes" id="UP000005640">
    <property type="component" value="Chromosome 14"/>
</dbReference>
<dbReference type="RNAct" id="O95072">
    <property type="molecule type" value="protein"/>
</dbReference>
<dbReference type="Bgee" id="ENSG00000100918">
    <property type="expression patterns" value="Expressed in adenohypophysis and 93 other cell types or tissues"/>
</dbReference>
<dbReference type="ExpressionAtlas" id="O95072">
    <property type="expression patterns" value="baseline and differential"/>
</dbReference>
<dbReference type="GO" id="GO:0000776">
    <property type="term" value="C:kinetochore"/>
    <property type="evidence" value="ECO:0007669"/>
    <property type="project" value="Ensembl"/>
</dbReference>
<dbReference type="GO" id="GO:0000800">
    <property type="term" value="C:lateral element"/>
    <property type="evidence" value="ECO:0007669"/>
    <property type="project" value="Ensembl"/>
</dbReference>
<dbReference type="GO" id="GO:0001673">
    <property type="term" value="C:male germ cell nucleus"/>
    <property type="evidence" value="ECO:0007669"/>
    <property type="project" value="Ensembl"/>
</dbReference>
<dbReference type="GO" id="GO:0030893">
    <property type="term" value="C:meiotic cohesin complex"/>
    <property type="evidence" value="ECO:0000318"/>
    <property type="project" value="GO_Central"/>
</dbReference>
<dbReference type="GO" id="GO:0005634">
    <property type="term" value="C:nucleus"/>
    <property type="evidence" value="ECO:0000304"/>
    <property type="project" value="ProtInc"/>
</dbReference>
<dbReference type="GO" id="GO:0003682">
    <property type="term" value="F:chromatin binding"/>
    <property type="evidence" value="ECO:0000318"/>
    <property type="project" value="GO_Central"/>
</dbReference>
<dbReference type="GO" id="GO:0006302">
    <property type="term" value="P:double-strand break repair"/>
    <property type="evidence" value="ECO:0000318"/>
    <property type="project" value="GO_Central"/>
</dbReference>
<dbReference type="GO" id="GO:0000724">
    <property type="term" value="P:double-strand break repair via homologous recombination"/>
    <property type="evidence" value="ECO:0007669"/>
    <property type="project" value="Ensembl"/>
</dbReference>
<dbReference type="GO" id="GO:0009566">
    <property type="term" value="P:fertilization"/>
    <property type="evidence" value="ECO:0007669"/>
    <property type="project" value="Ensembl"/>
</dbReference>
<dbReference type="GO" id="GO:0007141">
    <property type="term" value="P:male meiosis I"/>
    <property type="evidence" value="ECO:0007669"/>
    <property type="project" value="Ensembl"/>
</dbReference>
<dbReference type="GO" id="GO:0051321">
    <property type="term" value="P:meiotic cell cycle"/>
    <property type="evidence" value="ECO:0000304"/>
    <property type="project" value="ProtInc"/>
</dbReference>
<dbReference type="GO" id="GO:0051177">
    <property type="term" value="P:meiotic sister chromatid cohesion"/>
    <property type="evidence" value="ECO:0000318"/>
    <property type="project" value="GO_Central"/>
</dbReference>
<dbReference type="GO" id="GO:0001556">
    <property type="term" value="P:oocyte maturation"/>
    <property type="evidence" value="ECO:0007669"/>
    <property type="project" value="Ensembl"/>
</dbReference>
<dbReference type="GO" id="GO:0007131">
    <property type="term" value="P:reciprocal meiotic recombination"/>
    <property type="evidence" value="ECO:0000304"/>
    <property type="project" value="ProtInc"/>
</dbReference>
<dbReference type="GO" id="GO:0072520">
    <property type="term" value="P:seminiferous tubule development"/>
    <property type="evidence" value="ECO:0007669"/>
    <property type="project" value="Ensembl"/>
</dbReference>
<dbReference type="GO" id="GO:0007062">
    <property type="term" value="P:sister chromatid cohesion"/>
    <property type="evidence" value="ECO:0000304"/>
    <property type="project" value="ProtInc"/>
</dbReference>
<dbReference type="GO" id="GO:0007286">
    <property type="term" value="P:spermatid development"/>
    <property type="evidence" value="ECO:0007669"/>
    <property type="project" value="Ensembl"/>
</dbReference>
<dbReference type="GO" id="GO:0007283">
    <property type="term" value="P:spermatogenesis"/>
    <property type="evidence" value="ECO:0000304"/>
    <property type="project" value="ProtInc"/>
</dbReference>
<dbReference type="GO" id="GO:0007130">
    <property type="term" value="P:synaptonemal complex assembly"/>
    <property type="evidence" value="ECO:0007669"/>
    <property type="project" value="Ensembl"/>
</dbReference>
<dbReference type="CDD" id="cd21794">
    <property type="entry name" value="Rad21_Rec8_M_Rec8"/>
    <property type="match status" value="1"/>
</dbReference>
<dbReference type="FunFam" id="1.10.10.580:FF:000003">
    <property type="entry name" value="meiotic recombination protein REC8 homolog"/>
    <property type="match status" value="1"/>
</dbReference>
<dbReference type="Gene3D" id="1.10.10.580">
    <property type="entry name" value="Structural maintenance of chromosome 1. Chain E"/>
    <property type="match status" value="1"/>
</dbReference>
<dbReference type="InterPro" id="IPR039781">
    <property type="entry name" value="Rad21/Rec8-like"/>
</dbReference>
<dbReference type="InterPro" id="IPR006909">
    <property type="entry name" value="Rad21/Rec8_C_eu"/>
</dbReference>
<dbReference type="InterPro" id="IPR006910">
    <property type="entry name" value="Rad21_Rec8_N"/>
</dbReference>
<dbReference type="InterPro" id="IPR023093">
    <property type="entry name" value="ScpA-like_C"/>
</dbReference>
<dbReference type="InterPro" id="IPR036390">
    <property type="entry name" value="WH_DNA-bd_sf"/>
</dbReference>
<dbReference type="PANTHER" id="PTHR12585:SF27">
    <property type="entry name" value="MEIOTIC RECOMBINATION PROTEIN REC8 HOMOLOG"/>
    <property type="match status" value="1"/>
</dbReference>
<dbReference type="PANTHER" id="PTHR12585">
    <property type="entry name" value="SCC1 / RAD21 FAMILY MEMBER"/>
    <property type="match status" value="1"/>
</dbReference>
<dbReference type="Pfam" id="PF04824">
    <property type="entry name" value="Rad21_Rec8"/>
    <property type="match status" value="1"/>
</dbReference>
<dbReference type="Pfam" id="PF04825">
    <property type="entry name" value="Rad21_Rec8_N"/>
    <property type="match status" value="1"/>
</dbReference>
<dbReference type="SUPFAM" id="SSF46785">
    <property type="entry name" value="Winged helix' DNA-binding domain"/>
    <property type="match status" value="1"/>
</dbReference>
<sequence>MFYYPNVLQRHTGCFATIWLAATRGSRLVKREYLRVNVVKTCEEILNYVLVRVQPPQPGLPRPRFSLYLSAQLQIGVIRVYSQQCQYLVEDIQHILERLHRAQLQIRIDMETELPSLLLPNHLAMMETLEDAPDPFFGMMSVDPRLPSPFDIPQIRHLLEAAIPERVEEIPPEVPTEPREPERIPVTVLPPEAITILEAEPIRMLEIEGERELPEVSRRELDLLIAEEEEAILLEIPRLPPPAPAEVEGIGEALGPEELRLTGWEPGALLMEVTPPEELRLPAPPSPERRPPVPPPPRRRRRRRLLFWDKETQISPEKFQEQLQTRAHCWECPMVQPPERTIRGPAELFRTPTLSGWLPPELLGLWTHCAQPPPKALRRELPEEAAAEEERRKIEVPSEIEVPREALEPSVPLMVSLEISLEAAEEEKSRISLIPPEERWAWPEVEAPEAPALPVVPELPEVPMEMPLVLPPELELLSLEAVHRAVALELQANREPDFSSLVSPLSPRRMAARVFYLLLVLSAQQILHVKQEKPYGRLLIQPGPRFH</sequence>
<keyword id="KW-0025">Alternative splicing</keyword>
<keyword id="KW-0137">Centromere</keyword>
<keyword id="KW-0158">Chromosome</keyword>
<keyword id="KW-0159">Chromosome partition</keyword>
<keyword id="KW-0469">Meiosis</keyword>
<keyword id="KW-0539">Nucleus</keyword>
<keyword id="KW-0597">Phosphoprotein</keyword>
<keyword id="KW-1267">Proteomics identification</keyword>
<keyword id="KW-1185">Reference proteome</keyword>
<feature type="chain" id="PRO_0000097878" description="Meiotic recombination protein REC8 homolog">
    <location>
        <begin position="1"/>
        <end position="547"/>
    </location>
</feature>
<feature type="region of interest" description="Disordered" evidence="4">
    <location>
        <begin position="278"/>
        <end position="301"/>
    </location>
</feature>
<feature type="compositionally biased region" description="Pro residues" evidence="4">
    <location>
        <begin position="282"/>
        <end position="296"/>
    </location>
</feature>
<feature type="modified residue" description="Phosphoserine" evidence="3">
    <location>
        <position position="148"/>
    </location>
</feature>
<feature type="splice variant" id="VSP_037649" description="In isoform 2." evidence="7">
    <location>
        <begin position="272"/>
        <end position="288"/>
    </location>
</feature>
<feature type="sequence variant" id="VAR_051722" description="In dbSNP:rs34075659.">
    <original>R</original>
    <variation>C</variation>
    <location>
        <position position="31"/>
    </location>
</feature>
<feature type="sequence variant" id="VAR_051723" description="In dbSNP:rs35425516.">
    <original>P</original>
    <variation>L</variation>
    <location>
        <position position="294"/>
    </location>
</feature>
<feature type="sequence variant" id="VAR_058128" description="In dbSNP:rs17855369." evidence="6">
    <original>V</original>
    <variation>F</variation>
    <location>
        <position position="411"/>
    </location>
</feature>
<feature type="sequence conflict" description="In Ref. 2; BAA91690." evidence="8" ref="2">
    <original>V</original>
    <variation>A</variation>
    <location>
        <position position="89"/>
    </location>
</feature>
<feature type="sequence conflict" description="In Ref. 2; BAF83880." evidence="8" ref="2">
    <original>E</original>
    <variation>G</variation>
    <location>
        <position position="180"/>
    </location>
</feature>
<feature type="sequence conflict" description="In Ref. 5; AL136295." evidence="8" ref="5">
    <location>
        <position position="230"/>
    </location>
</feature>
<feature type="sequence conflict" description="In Ref. 2; BAF83880." evidence="8" ref="2">
    <original>R</original>
    <variation>G</variation>
    <location>
        <position position="289"/>
    </location>
</feature>
<reference key="1">
    <citation type="journal article" date="1999" name="Mol. Cell. Biol.">
        <title>Rec8p, a meiotic recombination and sister chromatid cohesion phosphoprotein of the Rad21p family conserved from fission yeast to humans.</title>
        <authorList>
            <person name="Parisi S."/>
            <person name="McKay M.J."/>
            <person name="Molnar M."/>
            <person name="Thompson M.A."/>
            <person name="van der Spek P.J."/>
            <person name="van Drunen-Schoenmaker E."/>
            <person name="Kanaar R."/>
            <person name="Lehmann E."/>
            <person name="Hoeijmakers J.H.J."/>
            <person name="Kohli J."/>
        </authorList>
    </citation>
    <scope>NUCLEOTIDE SEQUENCE [MRNA] (ISOFORM 1)</scope>
    <scope>TISSUE SPECIFICITY</scope>
    <source>
        <tissue>Brain</tissue>
    </source>
</reference>
<reference key="2">
    <citation type="journal article" date="2004" name="Nat. Genet.">
        <title>Complete sequencing and characterization of 21,243 full-length human cDNAs.</title>
        <authorList>
            <person name="Ota T."/>
            <person name="Suzuki Y."/>
            <person name="Nishikawa T."/>
            <person name="Otsuki T."/>
            <person name="Sugiyama T."/>
            <person name="Irie R."/>
            <person name="Wakamatsu A."/>
            <person name="Hayashi K."/>
            <person name="Sato H."/>
            <person name="Nagai K."/>
            <person name="Kimura K."/>
            <person name="Makita H."/>
            <person name="Sekine M."/>
            <person name="Obayashi M."/>
            <person name="Nishi T."/>
            <person name="Shibahara T."/>
            <person name="Tanaka T."/>
            <person name="Ishii S."/>
            <person name="Yamamoto J."/>
            <person name="Saito K."/>
            <person name="Kawai Y."/>
            <person name="Isono Y."/>
            <person name="Nakamura Y."/>
            <person name="Nagahari K."/>
            <person name="Murakami K."/>
            <person name="Yasuda T."/>
            <person name="Iwayanagi T."/>
            <person name="Wagatsuma M."/>
            <person name="Shiratori A."/>
            <person name="Sudo H."/>
            <person name="Hosoiri T."/>
            <person name="Kaku Y."/>
            <person name="Kodaira H."/>
            <person name="Kondo H."/>
            <person name="Sugawara M."/>
            <person name="Takahashi M."/>
            <person name="Kanda K."/>
            <person name="Yokoi T."/>
            <person name="Furuya T."/>
            <person name="Kikkawa E."/>
            <person name="Omura Y."/>
            <person name="Abe K."/>
            <person name="Kamihara K."/>
            <person name="Katsuta N."/>
            <person name="Sato K."/>
            <person name="Tanikawa M."/>
            <person name="Yamazaki M."/>
            <person name="Ninomiya K."/>
            <person name="Ishibashi T."/>
            <person name="Yamashita H."/>
            <person name="Murakawa K."/>
            <person name="Fujimori K."/>
            <person name="Tanai H."/>
            <person name="Kimata M."/>
            <person name="Watanabe M."/>
            <person name="Hiraoka S."/>
            <person name="Chiba Y."/>
            <person name="Ishida S."/>
            <person name="Ono Y."/>
            <person name="Takiguchi S."/>
            <person name="Watanabe S."/>
            <person name="Yosida M."/>
            <person name="Hotuta T."/>
            <person name="Kusano J."/>
            <person name="Kanehori K."/>
            <person name="Takahashi-Fujii A."/>
            <person name="Hara H."/>
            <person name="Tanase T.-O."/>
            <person name="Nomura Y."/>
            <person name="Togiya S."/>
            <person name="Komai F."/>
            <person name="Hara R."/>
            <person name="Takeuchi K."/>
            <person name="Arita M."/>
            <person name="Imose N."/>
            <person name="Musashino K."/>
            <person name="Yuuki H."/>
            <person name="Oshima A."/>
            <person name="Sasaki N."/>
            <person name="Aotsuka S."/>
            <person name="Yoshikawa Y."/>
            <person name="Matsunawa H."/>
            <person name="Ichihara T."/>
            <person name="Shiohata N."/>
            <person name="Sano S."/>
            <person name="Moriya S."/>
            <person name="Momiyama H."/>
            <person name="Satoh N."/>
            <person name="Takami S."/>
            <person name="Terashima Y."/>
            <person name="Suzuki O."/>
            <person name="Nakagawa S."/>
            <person name="Senoh A."/>
            <person name="Mizoguchi H."/>
            <person name="Goto Y."/>
            <person name="Shimizu F."/>
            <person name="Wakebe H."/>
            <person name="Hishigaki H."/>
            <person name="Watanabe T."/>
            <person name="Sugiyama A."/>
            <person name="Takemoto M."/>
            <person name="Kawakami B."/>
            <person name="Yamazaki M."/>
            <person name="Watanabe K."/>
            <person name="Kumagai A."/>
            <person name="Itakura S."/>
            <person name="Fukuzumi Y."/>
            <person name="Fujimori Y."/>
            <person name="Komiyama M."/>
            <person name="Tashiro H."/>
            <person name="Tanigami A."/>
            <person name="Fujiwara T."/>
            <person name="Ono T."/>
            <person name="Yamada K."/>
            <person name="Fujii Y."/>
            <person name="Ozaki K."/>
            <person name="Hirao M."/>
            <person name="Ohmori Y."/>
            <person name="Kawabata A."/>
            <person name="Hikiji T."/>
            <person name="Kobatake N."/>
            <person name="Inagaki H."/>
            <person name="Ikema Y."/>
            <person name="Okamoto S."/>
            <person name="Okitani R."/>
            <person name="Kawakami T."/>
            <person name="Noguchi S."/>
            <person name="Itoh T."/>
            <person name="Shigeta K."/>
            <person name="Senba T."/>
            <person name="Matsumura K."/>
            <person name="Nakajima Y."/>
            <person name="Mizuno T."/>
            <person name="Morinaga M."/>
            <person name="Sasaki M."/>
            <person name="Togashi T."/>
            <person name="Oyama M."/>
            <person name="Hata H."/>
            <person name="Watanabe M."/>
            <person name="Komatsu T."/>
            <person name="Mizushima-Sugano J."/>
            <person name="Satoh T."/>
            <person name="Shirai Y."/>
            <person name="Takahashi Y."/>
            <person name="Nakagawa K."/>
            <person name="Okumura K."/>
            <person name="Nagase T."/>
            <person name="Nomura N."/>
            <person name="Kikuchi H."/>
            <person name="Masuho Y."/>
            <person name="Yamashita R."/>
            <person name="Nakai K."/>
            <person name="Yada T."/>
            <person name="Nakamura Y."/>
            <person name="Ohara O."/>
            <person name="Isogai T."/>
            <person name="Sugano S."/>
        </authorList>
    </citation>
    <scope>NUCLEOTIDE SEQUENCE [LARGE SCALE MRNA] (ISOFORM 1)</scope>
    <source>
        <tissue>Teratocarcinoma</tissue>
    </source>
</reference>
<reference key="3">
    <citation type="submission" date="2004-06" db="EMBL/GenBank/DDBJ databases">
        <title>Cloning of human full open reading frames in Gateway(TM) system entry vector (pDONR201).</title>
        <authorList>
            <person name="Ebert L."/>
            <person name="Schick M."/>
            <person name="Neubert P."/>
            <person name="Schatten R."/>
            <person name="Henze S."/>
            <person name="Korn B."/>
        </authorList>
    </citation>
    <scope>NUCLEOTIDE SEQUENCE [LARGE SCALE MRNA] (ISOFORM 1)</scope>
</reference>
<reference key="4">
    <citation type="journal article" date="2007" name="BMC Genomics">
        <title>The full-ORF clone resource of the German cDNA consortium.</title>
        <authorList>
            <person name="Bechtel S."/>
            <person name="Rosenfelder H."/>
            <person name="Duda A."/>
            <person name="Schmidt C.P."/>
            <person name="Ernst U."/>
            <person name="Wellenreuther R."/>
            <person name="Mehrle A."/>
            <person name="Schuster C."/>
            <person name="Bahr A."/>
            <person name="Bloecker H."/>
            <person name="Heubner D."/>
            <person name="Hoerlein A."/>
            <person name="Michel G."/>
            <person name="Wedler H."/>
            <person name="Koehrer K."/>
            <person name="Ottenwaelder B."/>
            <person name="Poustka A."/>
            <person name="Wiemann S."/>
            <person name="Schupp I."/>
        </authorList>
    </citation>
    <scope>NUCLEOTIDE SEQUENCE [LARGE SCALE MRNA] (ISOFORM 2)</scope>
    <source>
        <tissue>Stomach</tissue>
    </source>
</reference>
<reference key="5">
    <citation type="journal article" date="2003" name="Nature">
        <title>The DNA sequence and analysis of human chromosome 14.</title>
        <authorList>
            <person name="Heilig R."/>
            <person name="Eckenberg R."/>
            <person name="Petit J.-L."/>
            <person name="Fonknechten N."/>
            <person name="Da Silva C."/>
            <person name="Cattolico L."/>
            <person name="Levy M."/>
            <person name="Barbe V."/>
            <person name="De Berardinis V."/>
            <person name="Ureta-Vidal A."/>
            <person name="Pelletier E."/>
            <person name="Vico V."/>
            <person name="Anthouard V."/>
            <person name="Rowen L."/>
            <person name="Madan A."/>
            <person name="Qin S."/>
            <person name="Sun H."/>
            <person name="Du H."/>
            <person name="Pepin K."/>
            <person name="Artiguenave F."/>
            <person name="Robert C."/>
            <person name="Cruaud C."/>
            <person name="Bruels T."/>
            <person name="Jaillon O."/>
            <person name="Friedlander L."/>
            <person name="Samson G."/>
            <person name="Brottier P."/>
            <person name="Cure S."/>
            <person name="Segurens B."/>
            <person name="Aniere F."/>
            <person name="Samain S."/>
            <person name="Crespeau H."/>
            <person name="Abbasi N."/>
            <person name="Aiach N."/>
            <person name="Boscus D."/>
            <person name="Dickhoff R."/>
            <person name="Dors M."/>
            <person name="Dubois I."/>
            <person name="Friedman C."/>
            <person name="Gouyvenoux M."/>
            <person name="James R."/>
            <person name="Madan A."/>
            <person name="Mairey-Estrada B."/>
            <person name="Mangenot S."/>
            <person name="Martins N."/>
            <person name="Menard M."/>
            <person name="Oztas S."/>
            <person name="Ratcliffe A."/>
            <person name="Shaffer T."/>
            <person name="Trask B."/>
            <person name="Vacherie B."/>
            <person name="Bellemere C."/>
            <person name="Belser C."/>
            <person name="Besnard-Gonnet M."/>
            <person name="Bartol-Mavel D."/>
            <person name="Boutard M."/>
            <person name="Briez-Silla S."/>
            <person name="Combette S."/>
            <person name="Dufosse-Laurent V."/>
            <person name="Ferron C."/>
            <person name="Lechaplais C."/>
            <person name="Louesse C."/>
            <person name="Muselet D."/>
            <person name="Magdelenat G."/>
            <person name="Pateau E."/>
            <person name="Petit E."/>
            <person name="Sirvain-Trukniewicz P."/>
            <person name="Trybou A."/>
            <person name="Vega-Czarny N."/>
            <person name="Bataille E."/>
            <person name="Bluet E."/>
            <person name="Bordelais I."/>
            <person name="Dubois M."/>
            <person name="Dumont C."/>
            <person name="Guerin T."/>
            <person name="Haffray S."/>
            <person name="Hammadi R."/>
            <person name="Muanga J."/>
            <person name="Pellouin V."/>
            <person name="Robert D."/>
            <person name="Wunderle E."/>
            <person name="Gauguet G."/>
            <person name="Roy A."/>
            <person name="Sainte-Marthe L."/>
            <person name="Verdier J."/>
            <person name="Verdier-Discala C."/>
            <person name="Hillier L.W."/>
            <person name="Fulton L."/>
            <person name="McPherson J."/>
            <person name="Matsuda F."/>
            <person name="Wilson R."/>
            <person name="Scarpelli C."/>
            <person name="Gyapay G."/>
            <person name="Wincker P."/>
            <person name="Saurin W."/>
            <person name="Quetier F."/>
            <person name="Waterston R."/>
            <person name="Hood L."/>
            <person name="Weissenbach J."/>
        </authorList>
    </citation>
    <scope>NUCLEOTIDE SEQUENCE [LARGE SCALE GENOMIC DNA]</scope>
</reference>
<reference key="6">
    <citation type="submission" date="2005-09" db="EMBL/GenBank/DDBJ databases">
        <authorList>
            <person name="Mural R.J."/>
            <person name="Istrail S."/>
            <person name="Sutton G.G."/>
            <person name="Florea L."/>
            <person name="Halpern A.L."/>
            <person name="Mobarry C.M."/>
            <person name="Lippert R."/>
            <person name="Walenz B."/>
            <person name="Shatkay H."/>
            <person name="Dew I."/>
            <person name="Miller J.R."/>
            <person name="Flanigan M.J."/>
            <person name="Edwards N.J."/>
            <person name="Bolanos R."/>
            <person name="Fasulo D."/>
            <person name="Halldorsson B.V."/>
            <person name="Hannenhalli S."/>
            <person name="Turner R."/>
            <person name="Yooseph S."/>
            <person name="Lu F."/>
            <person name="Nusskern D.R."/>
            <person name="Shue B.C."/>
            <person name="Zheng X.H."/>
            <person name="Zhong F."/>
            <person name="Delcher A.L."/>
            <person name="Huson D.H."/>
            <person name="Kravitz S.A."/>
            <person name="Mouchard L."/>
            <person name="Reinert K."/>
            <person name="Remington K.A."/>
            <person name="Clark A.G."/>
            <person name="Waterman M.S."/>
            <person name="Eichler E.E."/>
            <person name="Adams M.D."/>
            <person name="Hunkapiller M.W."/>
            <person name="Myers E.W."/>
            <person name="Venter J.C."/>
        </authorList>
    </citation>
    <scope>NUCLEOTIDE SEQUENCE [LARGE SCALE GENOMIC DNA]</scope>
</reference>
<reference key="7">
    <citation type="journal article" date="2004" name="Genome Res.">
        <title>The status, quality, and expansion of the NIH full-length cDNA project: the Mammalian Gene Collection (MGC).</title>
        <authorList>
            <consortium name="The MGC Project Team"/>
        </authorList>
    </citation>
    <scope>NUCLEOTIDE SEQUENCE [LARGE SCALE MRNA] (ISOFORM 1)</scope>
    <scope>VARIANT PHE-411</scope>
    <source>
        <tissue>Lung</tissue>
    </source>
</reference>
<protein>
    <recommendedName>
        <fullName>Meiotic recombination protein REC8 homolog</fullName>
    </recommendedName>
    <alternativeName>
        <fullName>Cohesin Rec8p</fullName>
    </alternativeName>
</protein>
<evidence type="ECO:0000250" key="1"/>
<evidence type="ECO:0000250" key="2">
    <source>
        <dbReference type="UniProtKB" id="Q6AYJ4"/>
    </source>
</evidence>
<evidence type="ECO:0000250" key="3">
    <source>
        <dbReference type="UniProtKB" id="Q8C5S7"/>
    </source>
</evidence>
<evidence type="ECO:0000256" key="4">
    <source>
        <dbReference type="SAM" id="MobiDB-lite"/>
    </source>
</evidence>
<evidence type="ECO:0000269" key="5">
    <source>
    </source>
</evidence>
<evidence type="ECO:0000269" key="6">
    <source>
    </source>
</evidence>
<evidence type="ECO:0000303" key="7">
    <source>
    </source>
</evidence>
<evidence type="ECO:0000305" key="8"/>
<organism>
    <name type="scientific">Homo sapiens</name>
    <name type="common">Human</name>
    <dbReference type="NCBI Taxonomy" id="9606"/>
    <lineage>
        <taxon>Eukaryota</taxon>
        <taxon>Metazoa</taxon>
        <taxon>Chordata</taxon>
        <taxon>Craniata</taxon>
        <taxon>Vertebrata</taxon>
        <taxon>Euteleostomi</taxon>
        <taxon>Mammalia</taxon>
        <taxon>Eutheria</taxon>
        <taxon>Euarchontoglires</taxon>
        <taxon>Primates</taxon>
        <taxon>Haplorrhini</taxon>
        <taxon>Catarrhini</taxon>
        <taxon>Hominidae</taxon>
        <taxon>Homo</taxon>
    </lineage>
</organism>
<comment type="function">
    <text evidence="1">Required during meiosis for separation of sister chromatids and homologous chromosomes. Proteolytic cleavage of REC8 on chromosome arms by separin during anaphase I allows for homologous chromosome separation in meiosis I and cleavage of REC8 on centromeres during anaphase II allows for sister chromatid separation in meiosis II (By similarity).</text>
</comment>
<comment type="subunit">
    <text evidence="1 3">Interacts (phosphorylated and unphosphorylated form) with SMC3. Interacts with SYCP3. Interacts (phosphorylated and unphosphorylated form) with SMC1B. Does not interact with SMC1A. Interacts with RAD51 (By similarity). Forms a complex with EWSR1, PRDM9, SYCP3 and SYCP1; complex formation is dependent of phosphorylated form of REC8 and requires PRDM9 bound to hotspot DNA; EWSR1 joins PRDM9 with the chromosomal axis through REC8 (By similarity).</text>
</comment>
<comment type="interaction">
    <interactant intactId="EBI-9361206">
        <id>O95072</id>
    </interactant>
    <interactant intactId="EBI-355275">
        <id>O95816</id>
        <label>BAG2</label>
    </interactant>
    <organismsDiffer>false</organismsDiffer>
    <experiments>2</experiments>
</comment>
<comment type="interaction">
    <interactant intactId="EBI-9361206">
        <id>O95072</id>
    </interactant>
    <interactant intactId="EBI-357085">
        <id>Q9UNE7</id>
        <label>STUB1</label>
    </interactant>
    <organismsDiffer>false</organismsDiffer>
    <experiments>2</experiments>
</comment>
<comment type="subcellular location">
    <subcellularLocation>
        <location evidence="2">Nucleus</location>
    </subcellularLocation>
    <subcellularLocation>
        <location evidence="2">Chromosome</location>
    </subcellularLocation>
    <subcellularLocation>
        <location evidence="2">Chromosome</location>
        <location evidence="2">Centromere</location>
    </subcellularLocation>
    <text evidence="2">In meiotic chromosomes, localized along axial elements in prophase from the leptotene to diplotene stages. At later prophase stages, diakinesis and metaphase I, localized along interstitial axes of chromosomes including both centromere and arm regions. No longer detected in arm regions in anaphase I but persists on centromere regions until metaphase II. Localized to centromeres and spindle poles in endopolyploid tumor cells.</text>
</comment>
<comment type="alternative products">
    <event type="alternative splicing"/>
    <isoform>
        <id>O95072-1</id>
        <name>1</name>
        <sequence type="displayed"/>
    </isoform>
    <isoform>
        <id>O95072-2</id>
        <name>2</name>
        <sequence type="described" ref="VSP_037649"/>
    </isoform>
</comment>
<comment type="tissue specificity">
    <text evidence="5">Expressed in testis and thymus. Expressed in the B-cell lines WI-L2-NS and Namalwa (at protein level).</text>
</comment>
<comment type="PTM">
    <text evidence="1">Phosphorylated.</text>
</comment>
<comment type="similarity">
    <text evidence="8">Belongs to the rad21 family.</text>
</comment>
<proteinExistence type="evidence at protein level"/>